<keyword id="KW-0004">4Fe-4S</keyword>
<keyword id="KW-0408">Iron</keyword>
<keyword id="KW-0411">Iron-sulfur</keyword>
<keyword id="KW-0414">Isoprene biosynthesis</keyword>
<keyword id="KW-0479">Metal-binding</keyword>
<keyword id="KW-0560">Oxidoreductase</keyword>
<keyword id="KW-1185">Reference proteome</keyword>
<reference key="1">
    <citation type="submission" date="2007-03" db="EMBL/GenBank/DDBJ databases">
        <title>Complete sequence of Shewanella loihica PV-4.</title>
        <authorList>
            <consortium name="US DOE Joint Genome Institute"/>
            <person name="Copeland A."/>
            <person name="Lucas S."/>
            <person name="Lapidus A."/>
            <person name="Barry K."/>
            <person name="Detter J.C."/>
            <person name="Glavina del Rio T."/>
            <person name="Hammon N."/>
            <person name="Israni S."/>
            <person name="Dalin E."/>
            <person name="Tice H."/>
            <person name="Pitluck S."/>
            <person name="Chain P."/>
            <person name="Malfatti S."/>
            <person name="Shin M."/>
            <person name="Vergez L."/>
            <person name="Schmutz J."/>
            <person name="Larimer F."/>
            <person name="Land M."/>
            <person name="Hauser L."/>
            <person name="Kyrpides N."/>
            <person name="Mikhailova N."/>
            <person name="Romine M.F."/>
            <person name="Serres G."/>
            <person name="Fredrickson J."/>
            <person name="Tiedje J."/>
            <person name="Richardson P."/>
        </authorList>
    </citation>
    <scope>NUCLEOTIDE SEQUENCE [LARGE SCALE GENOMIC DNA]</scope>
    <source>
        <strain>ATCC BAA-1088 / PV-4</strain>
    </source>
</reference>
<comment type="function">
    <text evidence="1">Converts 2C-methyl-D-erythritol 2,4-cyclodiphosphate (ME-2,4cPP) into 1-hydroxy-2-methyl-2-(E)-butenyl 4-diphosphate.</text>
</comment>
<comment type="catalytic activity">
    <reaction evidence="1">
        <text>(2E)-4-hydroxy-3-methylbut-2-enyl diphosphate + oxidized [flavodoxin] + H2O + 2 H(+) = 2-C-methyl-D-erythritol 2,4-cyclic diphosphate + reduced [flavodoxin]</text>
        <dbReference type="Rhea" id="RHEA:43604"/>
        <dbReference type="Rhea" id="RHEA-COMP:10622"/>
        <dbReference type="Rhea" id="RHEA-COMP:10623"/>
        <dbReference type="ChEBI" id="CHEBI:15377"/>
        <dbReference type="ChEBI" id="CHEBI:15378"/>
        <dbReference type="ChEBI" id="CHEBI:57618"/>
        <dbReference type="ChEBI" id="CHEBI:58210"/>
        <dbReference type="ChEBI" id="CHEBI:58483"/>
        <dbReference type="ChEBI" id="CHEBI:128753"/>
        <dbReference type="EC" id="1.17.7.3"/>
    </reaction>
</comment>
<comment type="cofactor">
    <cofactor evidence="1">
        <name>[4Fe-4S] cluster</name>
        <dbReference type="ChEBI" id="CHEBI:49883"/>
    </cofactor>
    <text evidence="1">Binds 1 [4Fe-4S] cluster.</text>
</comment>
<comment type="pathway">
    <text evidence="1">Isoprenoid biosynthesis; isopentenyl diphosphate biosynthesis via DXP pathway; isopentenyl diphosphate from 1-deoxy-D-xylulose 5-phosphate: step 5/6.</text>
</comment>
<comment type="similarity">
    <text evidence="1">Belongs to the IspG family.</text>
</comment>
<name>ISPG_SHELP</name>
<feature type="chain" id="PRO_1000011519" description="4-hydroxy-3-methylbut-2-en-1-yl diphosphate synthase (flavodoxin)">
    <location>
        <begin position="1"/>
        <end position="371"/>
    </location>
</feature>
<feature type="binding site" evidence="1">
    <location>
        <position position="270"/>
    </location>
    <ligand>
        <name>[4Fe-4S] cluster</name>
        <dbReference type="ChEBI" id="CHEBI:49883"/>
    </ligand>
</feature>
<feature type="binding site" evidence="1">
    <location>
        <position position="273"/>
    </location>
    <ligand>
        <name>[4Fe-4S] cluster</name>
        <dbReference type="ChEBI" id="CHEBI:49883"/>
    </ligand>
</feature>
<feature type="binding site" evidence="1">
    <location>
        <position position="305"/>
    </location>
    <ligand>
        <name>[4Fe-4S] cluster</name>
        <dbReference type="ChEBI" id="CHEBI:49883"/>
    </ligand>
</feature>
<feature type="binding site" evidence="1">
    <location>
        <position position="312"/>
    </location>
    <ligand>
        <name>[4Fe-4S] cluster</name>
        <dbReference type="ChEBI" id="CHEBI:49883"/>
    </ligand>
</feature>
<sequence>MYNESPIIRRPSTRIYVGDVPIGDGAPIAVQSMTNTRTTDVEATVAQIRALENVGADIVRVSVPTMDAAEAFKVIKQQTKVPLVADIHFDYRIALKVAEYGVDCLRINPGNIGNEERIRSVVECARDKNIPIRIGVNGGSLEKDLMDKYKEPTPQALLESAMRHVDILDRLNFDQFKVSVKASDVFLAVESYRLLAKQIKQPLHLGITEAGGARAGAVKSAVGLGMLLAEGIGDTLRISLAADPVEEIKVGFDILKSLRIRSRGINFIACPSCSRQEFDVIATVNELERRLEDVVTPMDVSIIGCVVNGPGEALVSDIGLTGGNRKSGYYDDGVRQKERFDNEHIVDQLEAKIRAKVASVDARIPTTDITE</sequence>
<proteinExistence type="inferred from homology"/>
<organism>
    <name type="scientific">Shewanella loihica (strain ATCC BAA-1088 / PV-4)</name>
    <dbReference type="NCBI Taxonomy" id="323850"/>
    <lineage>
        <taxon>Bacteria</taxon>
        <taxon>Pseudomonadati</taxon>
        <taxon>Pseudomonadota</taxon>
        <taxon>Gammaproteobacteria</taxon>
        <taxon>Alteromonadales</taxon>
        <taxon>Shewanellaceae</taxon>
        <taxon>Shewanella</taxon>
    </lineage>
</organism>
<gene>
    <name evidence="1" type="primary">ispG</name>
    <name type="ordered locus">Shew_1290</name>
</gene>
<dbReference type="EC" id="1.17.7.3" evidence="1"/>
<dbReference type="EMBL" id="CP000606">
    <property type="protein sequence ID" value="ABO23160.1"/>
    <property type="molecule type" value="Genomic_DNA"/>
</dbReference>
<dbReference type="RefSeq" id="WP_011865092.1">
    <property type="nucleotide sequence ID" value="NC_009092.1"/>
</dbReference>
<dbReference type="SMR" id="A3QCG2"/>
<dbReference type="STRING" id="323850.Shew_1290"/>
<dbReference type="KEGG" id="slo:Shew_1290"/>
<dbReference type="eggNOG" id="COG0821">
    <property type="taxonomic scope" value="Bacteria"/>
</dbReference>
<dbReference type="HOGENOM" id="CLU_042258_0_0_6"/>
<dbReference type="OrthoDB" id="9803214at2"/>
<dbReference type="UniPathway" id="UPA00056">
    <property type="reaction ID" value="UER00096"/>
</dbReference>
<dbReference type="Proteomes" id="UP000001558">
    <property type="component" value="Chromosome"/>
</dbReference>
<dbReference type="GO" id="GO:0051539">
    <property type="term" value="F:4 iron, 4 sulfur cluster binding"/>
    <property type="evidence" value="ECO:0007669"/>
    <property type="project" value="UniProtKB-UniRule"/>
</dbReference>
<dbReference type="GO" id="GO:0046429">
    <property type="term" value="F:4-hydroxy-3-methylbut-2-en-1-yl diphosphate synthase activity (ferredoxin)"/>
    <property type="evidence" value="ECO:0007669"/>
    <property type="project" value="UniProtKB-UniRule"/>
</dbReference>
<dbReference type="GO" id="GO:0141197">
    <property type="term" value="F:4-hydroxy-3-methylbut-2-enyl-diphosphate synthase activity (flavodoxin)"/>
    <property type="evidence" value="ECO:0007669"/>
    <property type="project" value="UniProtKB-EC"/>
</dbReference>
<dbReference type="GO" id="GO:0005506">
    <property type="term" value="F:iron ion binding"/>
    <property type="evidence" value="ECO:0007669"/>
    <property type="project" value="InterPro"/>
</dbReference>
<dbReference type="GO" id="GO:0019288">
    <property type="term" value="P:isopentenyl diphosphate biosynthetic process, methylerythritol 4-phosphate pathway"/>
    <property type="evidence" value="ECO:0007669"/>
    <property type="project" value="UniProtKB-UniRule"/>
</dbReference>
<dbReference type="GO" id="GO:0016114">
    <property type="term" value="P:terpenoid biosynthetic process"/>
    <property type="evidence" value="ECO:0007669"/>
    <property type="project" value="InterPro"/>
</dbReference>
<dbReference type="FunFam" id="3.20.20.20:FF:000001">
    <property type="entry name" value="4-hydroxy-3-methylbut-2-en-1-yl diphosphate synthase (flavodoxin)"/>
    <property type="match status" value="1"/>
</dbReference>
<dbReference type="FunFam" id="3.30.413.10:FF:000002">
    <property type="entry name" value="4-hydroxy-3-methylbut-2-en-1-yl diphosphate synthase (flavodoxin)"/>
    <property type="match status" value="1"/>
</dbReference>
<dbReference type="Gene3D" id="3.20.20.20">
    <property type="entry name" value="Dihydropteroate synthase-like"/>
    <property type="match status" value="1"/>
</dbReference>
<dbReference type="Gene3D" id="3.30.413.10">
    <property type="entry name" value="Sulfite Reductase Hemoprotein, domain 1"/>
    <property type="match status" value="1"/>
</dbReference>
<dbReference type="HAMAP" id="MF_00159">
    <property type="entry name" value="IspG"/>
    <property type="match status" value="1"/>
</dbReference>
<dbReference type="InterPro" id="IPR011005">
    <property type="entry name" value="Dihydropteroate_synth-like_sf"/>
</dbReference>
<dbReference type="InterPro" id="IPR016425">
    <property type="entry name" value="IspG_bac"/>
</dbReference>
<dbReference type="InterPro" id="IPR004588">
    <property type="entry name" value="IspG_bac-typ"/>
</dbReference>
<dbReference type="InterPro" id="IPR045854">
    <property type="entry name" value="NO2/SO3_Rdtase_4Fe4S_sf"/>
</dbReference>
<dbReference type="NCBIfam" id="TIGR00612">
    <property type="entry name" value="ispG_gcpE"/>
    <property type="match status" value="1"/>
</dbReference>
<dbReference type="NCBIfam" id="NF001540">
    <property type="entry name" value="PRK00366.1"/>
    <property type="match status" value="1"/>
</dbReference>
<dbReference type="PANTHER" id="PTHR30454">
    <property type="entry name" value="4-HYDROXY-3-METHYLBUT-2-EN-1-YL DIPHOSPHATE SYNTHASE"/>
    <property type="match status" value="1"/>
</dbReference>
<dbReference type="PANTHER" id="PTHR30454:SF0">
    <property type="entry name" value="4-HYDROXY-3-METHYLBUT-2-EN-1-YL DIPHOSPHATE SYNTHASE (FERREDOXIN), CHLOROPLASTIC"/>
    <property type="match status" value="1"/>
</dbReference>
<dbReference type="Pfam" id="PF04551">
    <property type="entry name" value="GcpE"/>
    <property type="match status" value="1"/>
</dbReference>
<dbReference type="PIRSF" id="PIRSF004640">
    <property type="entry name" value="IspG"/>
    <property type="match status" value="1"/>
</dbReference>
<dbReference type="SUPFAM" id="SSF51717">
    <property type="entry name" value="Dihydropteroate synthetase-like"/>
    <property type="match status" value="1"/>
</dbReference>
<dbReference type="SUPFAM" id="SSF56014">
    <property type="entry name" value="Nitrite and sulphite reductase 4Fe-4S domain-like"/>
    <property type="match status" value="1"/>
</dbReference>
<protein>
    <recommendedName>
        <fullName evidence="1">4-hydroxy-3-methylbut-2-en-1-yl diphosphate synthase (flavodoxin)</fullName>
        <ecNumber evidence="1">1.17.7.3</ecNumber>
    </recommendedName>
    <alternativeName>
        <fullName evidence="1">1-hydroxy-2-methyl-2-(E)-butenyl 4-diphosphate synthase</fullName>
    </alternativeName>
</protein>
<evidence type="ECO:0000255" key="1">
    <source>
        <dbReference type="HAMAP-Rule" id="MF_00159"/>
    </source>
</evidence>
<accession>A3QCG2</accession>